<protein>
    <recommendedName>
        <fullName evidence="1">Ribosome-binding factor A</fullName>
    </recommendedName>
</protein>
<comment type="function">
    <text evidence="1">One of several proteins that assist in the late maturation steps of the functional core of the 30S ribosomal subunit. Associates with free 30S ribosomal subunits (but not with 30S subunits that are part of 70S ribosomes or polysomes). Required for efficient processing of 16S rRNA. May interact with the 5'-terminal helix region of 16S rRNA.</text>
</comment>
<comment type="subunit">
    <text evidence="1">Monomer. Binds 30S ribosomal subunits, but not 50S ribosomal subunits or 70S ribosomes.</text>
</comment>
<comment type="subcellular location">
    <subcellularLocation>
        <location evidence="1">Cytoplasm</location>
    </subcellularLocation>
</comment>
<comment type="similarity">
    <text evidence="1">Belongs to the RbfA family.</text>
</comment>
<feature type="chain" id="PRO_1000000165" description="Ribosome-binding factor A">
    <location>
        <begin position="1"/>
        <end position="123"/>
    </location>
</feature>
<reference key="1">
    <citation type="journal article" date="2007" name="PLoS Genet.">
        <title>Patterns and implications of gene gain and loss in the evolution of Prochlorococcus.</title>
        <authorList>
            <person name="Kettler G.C."/>
            <person name="Martiny A.C."/>
            <person name="Huang K."/>
            <person name="Zucker J."/>
            <person name="Coleman M.L."/>
            <person name="Rodrigue S."/>
            <person name="Chen F."/>
            <person name="Lapidus A."/>
            <person name="Ferriera S."/>
            <person name="Johnson J."/>
            <person name="Steglich C."/>
            <person name="Church G.M."/>
            <person name="Richardson P."/>
            <person name="Chisholm S.W."/>
        </authorList>
    </citation>
    <scope>NUCLEOTIDE SEQUENCE [LARGE SCALE GENOMIC DNA]</scope>
    <source>
        <strain>NATL1A</strain>
    </source>
</reference>
<organism>
    <name type="scientific">Prochlorococcus marinus (strain NATL1A)</name>
    <dbReference type="NCBI Taxonomy" id="167555"/>
    <lineage>
        <taxon>Bacteria</taxon>
        <taxon>Bacillati</taxon>
        <taxon>Cyanobacteriota</taxon>
        <taxon>Cyanophyceae</taxon>
        <taxon>Synechococcales</taxon>
        <taxon>Prochlorococcaceae</taxon>
        <taxon>Prochlorococcus</taxon>
    </lineage>
</organism>
<keyword id="KW-0963">Cytoplasm</keyword>
<keyword id="KW-0690">Ribosome biogenesis</keyword>
<accession>A2BZT9</accession>
<evidence type="ECO:0000255" key="1">
    <source>
        <dbReference type="HAMAP-Rule" id="MF_00003"/>
    </source>
</evidence>
<name>RBFA_PROM1</name>
<gene>
    <name evidence="1" type="primary">rbfA</name>
    <name type="ordered locus">NATL1_01851</name>
</gene>
<sequence length="123" mass="14037">MANSRRVEKLAALLKREISELLVNGIRDERIHQAMITITSVEVSGDLQHARIFISLFGEEKKKDQVLVGLEEAKGFIRAELARRLQMRRSPELVFKIDKGMTKGPEVLDLLNALELERKSKDL</sequence>
<dbReference type="EMBL" id="CP000553">
    <property type="protein sequence ID" value="ABM74749.1"/>
    <property type="molecule type" value="Genomic_DNA"/>
</dbReference>
<dbReference type="RefSeq" id="WP_011822974.1">
    <property type="nucleotide sequence ID" value="NC_008819.1"/>
</dbReference>
<dbReference type="SMR" id="A2BZT9"/>
<dbReference type="KEGG" id="pme:NATL1_01851"/>
<dbReference type="eggNOG" id="COG0858">
    <property type="taxonomic scope" value="Bacteria"/>
</dbReference>
<dbReference type="HOGENOM" id="CLU_089475_2_1_3"/>
<dbReference type="Proteomes" id="UP000002592">
    <property type="component" value="Chromosome"/>
</dbReference>
<dbReference type="GO" id="GO:0005829">
    <property type="term" value="C:cytosol"/>
    <property type="evidence" value="ECO:0007669"/>
    <property type="project" value="TreeGrafter"/>
</dbReference>
<dbReference type="GO" id="GO:0043024">
    <property type="term" value="F:ribosomal small subunit binding"/>
    <property type="evidence" value="ECO:0007669"/>
    <property type="project" value="TreeGrafter"/>
</dbReference>
<dbReference type="GO" id="GO:0030490">
    <property type="term" value="P:maturation of SSU-rRNA"/>
    <property type="evidence" value="ECO:0007669"/>
    <property type="project" value="UniProtKB-UniRule"/>
</dbReference>
<dbReference type="Gene3D" id="3.30.300.20">
    <property type="match status" value="1"/>
</dbReference>
<dbReference type="HAMAP" id="MF_00003">
    <property type="entry name" value="RbfA"/>
    <property type="match status" value="1"/>
</dbReference>
<dbReference type="InterPro" id="IPR015946">
    <property type="entry name" value="KH_dom-like_a/b"/>
</dbReference>
<dbReference type="InterPro" id="IPR000238">
    <property type="entry name" value="RbfA"/>
</dbReference>
<dbReference type="InterPro" id="IPR023799">
    <property type="entry name" value="RbfA_dom_sf"/>
</dbReference>
<dbReference type="InterPro" id="IPR020053">
    <property type="entry name" value="Ribosome-bd_factorA_CS"/>
</dbReference>
<dbReference type="NCBIfam" id="TIGR00082">
    <property type="entry name" value="rbfA"/>
    <property type="match status" value="1"/>
</dbReference>
<dbReference type="PANTHER" id="PTHR33515">
    <property type="entry name" value="RIBOSOME-BINDING FACTOR A, CHLOROPLASTIC-RELATED"/>
    <property type="match status" value="1"/>
</dbReference>
<dbReference type="PANTHER" id="PTHR33515:SF1">
    <property type="entry name" value="RIBOSOME-BINDING FACTOR A, CHLOROPLASTIC-RELATED"/>
    <property type="match status" value="1"/>
</dbReference>
<dbReference type="Pfam" id="PF02033">
    <property type="entry name" value="RBFA"/>
    <property type="match status" value="1"/>
</dbReference>
<dbReference type="SUPFAM" id="SSF89919">
    <property type="entry name" value="Ribosome-binding factor A, RbfA"/>
    <property type="match status" value="1"/>
</dbReference>
<dbReference type="PROSITE" id="PS01319">
    <property type="entry name" value="RBFA"/>
    <property type="match status" value="1"/>
</dbReference>
<proteinExistence type="inferred from homology"/>